<feature type="chain" id="PRO_1000046502" description="Met repressor">
    <location>
        <begin position="1"/>
        <end position="105"/>
    </location>
</feature>
<evidence type="ECO:0000255" key="1">
    <source>
        <dbReference type="HAMAP-Rule" id="MF_00744"/>
    </source>
</evidence>
<dbReference type="EMBL" id="CP000308">
    <property type="protein sequence ID" value="ABG12231.1"/>
    <property type="molecule type" value="Genomic_DNA"/>
</dbReference>
<dbReference type="RefSeq" id="WP_002208935.1">
    <property type="nucleotide sequence ID" value="NZ_CP009906.1"/>
</dbReference>
<dbReference type="SMR" id="Q1CBE1"/>
<dbReference type="GeneID" id="57974482"/>
<dbReference type="KEGG" id="ypa:YPA_0262"/>
<dbReference type="Proteomes" id="UP000001971">
    <property type="component" value="Chromosome"/>
</dbReference>
<dbReference type="GO" id="GO:0005737">
    <property type="term" value="C:cytoplasm"/>
    <property type="evidence" value="ECO:0007669"/>
    <property type="project" value="UniProtKB-SubCell"/>
</dbReference>
<dbReference type="GO" id="GO:0003677">
    <property type="term" value="F:DNA binding"/>
    <property type="evidence" value="ECO:0007669"/>
    <property type="project" value="UniProtKB-KW"/>
</dbReference>
<dbReference type="GO" id="GO:0003700">
    <property type="term" value="F:DNA-binding transcription factor activity"/>
    <property type="evidence" value="ECO:0007669"/>
    <property type="project" value="InterPro"/>
</dbReference>
<dbReference type="GO" id="GO:0009086">
    <property type="term" value="P:methionine biosynthetic process"/>
    <property type="evidence" value="ECO:0007669"/>
    <property type="project" value="UniProtKB-UniRule"/>
</dbReference>
<dbReference type="GO" id="GO:0045892">
    <property type="term" value="P:negative regulation of DNA-templated transcription"/>
    <property type="evidence" value="ECO:0007669"/>
    <property type="project" value="UniProtKB-UniRule"/>
</dbReference>
<dbReference type="CDD" id="cd00490">
    <property type="entry name" value="Met_repressor_MetJ"/>
    <property type="match status" value="1"/>
</dbReference>
<dbReference type="FunFam" id="1.10.140.10:FF:000001">
    <property type="entry name" value="Met repressor"/>
    <property type="match status" value="1"/>
</dbReference>
<dbReference type="Gene3D" id="1.10.140.10">
    <property type="entry name" value="MET Apo-Repressor, subunit A"/>
    <property type="match status" value="1"/>
</dbReference>
<dbReference type="HAMAP" id="MF_00744">
    <property type="entry name" value="MetJ"/>
    <property type="match status" value="1"/>
</dbReference>
<dbReference type="InterPro" id="IPR002084">
    <property type="entry name" value="Met_repressor_MetJ"/>
</dbReference>
<dbReference type="InterPro" id="IPR023453">
    <property type="entry name" value="Met_repressor_MetJ_dom_sf"/>
</dbReference>
<dbReference type="InterPro" id="IPR010985">
    <property type="entry name" value="Ribbon_hlx_hlx"/>
</dbReference>
<dbReference type="NCBIfam" id="NF003622">
    <property type="entry name" value="PRK05264.1"/>
    <property type="match status" value="1"/>
</dbReference>
<dbReference type="Pfam" id="PF01340">
    <property type="entry name" value="MetJ"/>
    <property type="match status" value="1"/>
</dbReference>
<dbReference type="SUPFAM" id="SSF47598">
    <property type="entry name" value="Ribbon-helix-helix"/>
    <property type="match status" value="1"/>
</dbReference>
<comment type="function">
    <text evidence="1">This regulatory protein, when combined with SAM (S-adenosylmethionine) represses the expression of the methionine regulon and of enzymes involved in SAM synthesis.</text>
</comment>
<comment type="subunit">
    <text evidence="1">Homodimer.</text>
</comment>
<comment type="subcellular location">
    <subcellularLocation>
        <location evidence="1">Cytoplasm</location>
    </subcellularLocation>
</comment>
<comment type="domain">
    <text>Does not bind DNA by a helix-turn-helix motif.</text>
</comment>
<comment type="similarity">
    <text evidence="1">Belongs to the MetJ family.</text>
</comment>
<gene>
    <name evidence="1" type="primary">metJ</name>
    <name type="ordered locus">YPA_0262</name>
</gene>
<name>METJ_YERPA</name>
<organism>
    <name type="scientific">Yersinia pestis bv. Antiqua (strain Antiqua)</name>
    <dbReference type="NCBI Taxonomy" id="360102"/>
    <lineage>
        <taxon>Bacteria</taxon>
        <taxon>Pseudomonadati</taxon>
        <taxon>Pseudomonadota</taxon>
        <taxon>Gammaproteobacteria</taxon>
        <taxon>Enterobacterales</taxon>
        <taxon>Yersiniaceae</taxon>
        <taxon>Yersinia</taxon>
    </lineage>
</organism>
<sequence length="105" mass="12149">MAEWNGEYVSPYAEHGKKSKQVKKITVSIPLKVLKILTDERTRRQVNNLRHATNSELLCEAFLHAFTGQPLPNDEDLRKERSDEIPEAAKILMRELGVDPDTWEY</sequence>
<keyword id="KW-0028">Amino-acid biosynthesis</keyword>
<keyword id="KW-0963">Cytoplasm</keyword>
<keyword id="KW-0238">DNA-binding</keyword>
<keyword id="KW-0486">Methionine biosynthesis</keyword>
<keyword id="KW-0678">Repressor</keyword>
<keyword id="KW-0804">Transcription</keyword>
<keyword id="KW-0805">Transcription regulation</keyword>
<protein>
    <recommendedName>
        <fullName evidence="1">Met repressor</fullName>
    </recommendedName>
    <alternativeName>
        <fullName evidence="1">Met regulon regulatory protein MetJ</fullName>
    </alternativeName>
</protein>
<proteinExistence type="inferred from homology"/>
<accession>Q1CBE1</accession>
<reference key="1">
    <citation type="journal article" date="2006" name="J. Bacteriol.">
        <title>Complete genome sequence of Yersinia pestis strains Antiqua and Nepal516: evidence of gene reduction in an emerging pathogen.</title>
        <authorList>
            <person name="Chain P.S.G."/>
            <person name="Hu P."/>
            <person name="Malfatti S.A."/>
            <person name="Radnedge L."/>
            <person name="Larimer F."/>
            <person name="Vergez L.M."/>
            <person name="Worsham P."/>
            <person name="Chu M.C."/>
            <person name="Andersen G.L."/>
        </authorList>
    </citation>
    <scope>NUCLEOTIDE SEQUENCE [LARGE SCALE GENOMIC DNA]</scope>
    <source>
        <strain>Antiqua</strain>
    </source>
</reference>